<sequence length="454" mass="49294">MSDNDTIVAQATPPGRGGVGILRISGFKAREVAETVLGKLPKPRYADYLPFKDADGSVLDQGIALWFPGPNSFTGEDVLELQGHGGPVILDLLLKRILTIPGLRIARPGEFSERAFLYDKLDLAQAEAIADLIDASSEQAARSALNSLQGAFSARVNHLVEALTHLRIYVEAAIDFPDEEIDFLSDGKIEAQLNDVIADLDAVRAEARQGSLLREGMKVVIAGRPNAGKSSLLNALAGREAAIVTDIAGTTRDVLREHIHIDGMPLHIIDTAGLREASDEVERIGIERAWQEIEQADRVLFMVDGTTTDAVDPAEIWPEFIARLPAKLPITVVRNKADITGETLGMSEVNGHALIRLSARTGEGVEVLRNHLKQSMGFDTNMEGGFLARRRHLQALEQAAEHLQQGKAQLLGAWAGELLAEELRLAQQNLSEITGEFTSDDLLGRIFSSFCIGK</sequence>
<name>MNME_ECO24</name>
<protein>
    <recommendedName>
        <fullName evidence="1">tRNA modification GTPase MnmE</fullName>
        <ecNumber evidence="1">3.6.-.-</ecNumber>
    </recommendedName>
</protein>
<keyword id="KW-0963">Cytoplasm</keyword>
<keyword id="KW-0342">GTP-binding</keyword>
<keyword id="KW-0378">Hydrolase</keyword>
<keyword id="KW-0460">Magnesium</keyword>
<keyword id="KW-0479">Metal-binding</keyword>
<keyword id="KW-0547">Nucleotide-binding</keyword>
<keyword id="KW-0630">Potassium</keyword>
<keyword id="KW-1185">Reference proteome</keyword>
<keyword id="KW-0819">tRNA processing</keyword>
<feature type="chain" id="PRO_1000060037" description="tRNA modification GTPase MnmE">
    <location>
        <begin position="1"/>
        <end position="454"/>
    </location>
</feature>
<feature type="domain" description="TrmE-type G">
    <location>
        <begin position="216"/>
        <end position="377"/>
    </location>
</feature>
<feature type="binding site" evidence="1">
    <location>
        <position position="23"/>
    </location>
    <ligand>
        <name>(6S)-5-formyl-5,6,7,8-tetrahydrofolate</name>
        <dbReference type="ChEBI" id="CHEBI:57457"/>
    </ligand>
</feature>
<feature type="binding site" evidence="1">
    <location>
        <position position="80"/>
    </location>
    <ligand>
        <name>(6S)-5-formyl-5,6,7,8-tetrahydrofolate</name>
        <dbReference type="ChEBI" id="CHEBI:57457"/>
    </ligand>
</feature>
<feature type="binding site" evidence="1">
    <location>
        <position position="120"/>
    </location>
    <ligand>
        <name>(6S)-5-formyl-5,6,7,8-tetrahydrofolate</name>
        <dbReference type="ChEBI" id="CHEBI:57457"/>
    </ligand>
</feature>
<feature type="binding site" evidence="1">
    <location>
        <begin position="226"/>
        <end position="231"/>
    </location>
    <ligand>
        <name>GTP</name>
        <dbReference type="ChEBI" id="CHEBI:37565"/>
    </ligand>
</feature>
<feature type="binding site" evidence="1">
    <location>
        <position position="226"/>
    </location>
    <ligand>
        <name>K(+)</name>
        <dbReference type="ChEBI" id="CHEBI:29103"/>
    </ligand>
</feature>
<feature type="binding site" evidence="1">
    <location>
        <position position="230"/>
    </location>
    <ligand>
        <name>Mg(2+)</name>
        <dbReference type="ChEBI" id="CHEBI:18420"/>
    </ligand>
</feature>
<feature type="binding site" evidence="1">
    <location>
        <begin position="245"/>
        <end position="251"/>
    </location>
    <ligand>
        <name>GTP</name>
        <dbReference type="ChEBI" id="CHEBI:37565"/>
    </ligand>
</feature>
<feature type="binding site" evidence="1">
    <location>
        <position position="245"/>
    </location>
    <ligand>
        <name>K(+)</name>
        <dbReference type="ChEBI" id="CHEBI:29103"/>
    </ligand>
</feature>
<feature type="binding site" evidence="1">
    <location>
        <position position="247"/>
    </location>
    <ligand>
        <name>K(+)</name>
        <dbReference type="ChEBI" id="CHEBI:29103"/>
    </ligand>
</feature>
<feature type="binding site" evidence="1">
    <location>
        <position position="250"/>
    </location>
    <ligand>
        <name>K(+)</name>
        <dbReference type="ChEBI" id="CHEBI:29103"/>
    </ligand>
</feature>
<feature type="binding site" evidence="1">
    <location>
        <position position="251"/>
    </location>
    <ligand>
        <name>Mg(2+)</name>
        <dbReference type="ChEBI" id="CHEBI:18420"/>
    </ligand>
</feature>
<feature type="binding site" evidence="1">
    <location>
        <begin position="270"/>
        <end position="273"/>
    </location>
    <ligand>
        <name>GTP</name>
        <dbReference type="ChEBI" id="CHEBI:37565"/>
    </ligand>
</feature>
<feature type="binding site" evidence="1">
    <location>
        <begin position="335"/>
        <end position="338"/>
    </location>
    <ligand>
        <name>GTP</name>
        <dbReference type="ChEBI" id="CHEBI:37565"/>
    </ligand>
</feature>
<feature type="binding site" evidence="1">
    <location>
        <begin position="358"/>
        <end position="360"/>
    </location>
    <ligand>
        <name>GTP</name>
        <dbReference type="ChEBI" id="CHEBI:37565"/>
    </ligand>
</feature>
<feature type="binding site" evidence="1">
    <location>
        <position position="454"/>
    </location>
    <ligand>
        <name>(6S)-5-formyl-5,6,7,8-tetrahydrofolate</name>
        <dbReference type="ChEBI" id="CHEBI:57457"/>
    </ligand>
</feature>
<organism>
    <name type="scientific">Escherichia coli O139:H28 (strain E24377A / ETEC)</name>
    <dbReference type="NCBI Taxonomy" id="331111"/>
    <lineage>
        <taxon>Bacteria</taxon>
        <taxon>Pseudomonadati</taxon>
        <taxon>Pseudomonadota</taxon>
        <taxon>Gammaproteobacteria</taxon>
        <taxon>Enterobacterales</taxon>
        <taxon>Enterobacteriaceae</taxon>
        <taxon>Escherichia</taxon>
    </lineage>
</organism>
<proteinExistence type="inferred from homology"/>
<evidence type="ECO:0000255" key="1">
    <source>
        <dbReference type="HAMAP-Rule" id="MF_00379"/>
    </source>
</evidence>
<comment type="function">
    <text evidence="1">Exhibits a very high intrinsic GTPase hydrolysis rate. Involved in the addition of a carboxymethylaminomethyl (cmnm) group at the wobble position (U34) of certain tRNAs, forming tRNA-cmnm(5)s(2)U34.</text>
</comment>
<comment type="cofactor">
    <cofactor evidence="1">
        <name>K(+)</name>
        <dbReference type="ChEBI" id="CHEBI:29103"/>
    </cofactor>
    <text evidence="1">Binds 1 potassium ion per subunit.</text>
</comment>
<comment type="subunit">
    <text evidence="1">Homodimer. Heterotetramer of two MnmE and two MnmG subunits.</text>
</comment>
<comment type="subcellular location">
    <subcellularLocation>
        <location evidence="1">Cytoplasm</location>
    </subcellularLocation>
</comment>
<comment type="similarity">
    <text evidence="1">Belongs to the TRAFAC class TrmE-Era-EngA-EngB-Septin-like GTPase superfamily. TrmE GTPase family.</text>
</comment>
<dbReference type="EC" id="3.6.-.-" evidence="1"/>
<dbReference type="EMBL" id="CP000800">
    <property type="protein sequence ID" value="ABV17155.1"/>
    <property type="molecule type" value="Genomic_DNA"/>
</dbReference>
<dbReference type="RefSeq" id="WP_001282352.1">
    <property type="nucleotide sequence ID" value="NC_009801.1"/>
</dbReference>
<dbReference type="BMRB" id="A7ZTR2"/>
<dbReference type="SMR" id="A7ZTR2"/>
<dbReference type="KEGG" id="ecw:EcE24377A_4216"/>
<dbReference type="HOGENOM" id="CLU_019624_4_1_6"/>
<dbReference type="Proteomes" id="UP000001122">
    <property type="component" value="Chromosome"/>
</dbReference>
<dbReference type="GO" id="GO:0005829">
    <property type="term" value="C:cytosol"/>
    <property type="evidence" value="ECO:0007669"/>
    <property type="project" value="TreeGrafter"/>
</dbReference>
<dbReference type="GO" id="GO:0005525">
    <property type="term" value="F:GTP binding"/>
    <property type="evidence" value="ECO:0007669"/>
    <property type="project" value="UniProtKB-UniRule"/>
</dbReference>
<dbReference type="GO" id="GO:0003924">
    <property type="term" value="F:GTPase activity"/>
    <property type="evidence" value="ECO:0007669"/>
    <property type="project" value="UniProtKB-UniRule"/>
</dbReference>
<dbReference type="GO" id="GO:0046872">
    <property type="term" value="F:metal ion binding"/>
    <property type="evidence" value="ECO:0007669"/>
    <property type="project" value="UniProtKB-KW"/>
</dbReference>
<dbReference type="GO" id="GO:0030488">
    <property type="term" value="P:tRNA methylation"/>
    <property type="evidence" value="ECO:0007669"/>
    <property type="project" value="TreeGrafter"/>
</dbReference>
<dbReference type="GO" id="GO:0002098">
    <property type="term" value="P:tRNA wobble uridine modification"/>
    <property type="evidence" value="ECO:0007669"/>
    <property type="project" value="TreeGrafter"/>
</dbReference>
<dbReference type="CDD" id="cd04164">
    <property type="entry name" value="trmE"/>
    <property type="match status" value="1"/>
</dbReference>
<dbReference type="CDD" id="cd14858">
    <property type="entry name" value="TrmE_N"/>
    <property type="match status" value="1"/>
</dbReference>
<dbReference type="FunFam" id="3.30.1360.120:FF:000001">
    <property type="entry name" value="tRNA modification GTPase MnmE"/>
    <property type="match status" value="1"/>
</dbReference>
<dbReference type="FunFam" id="3.40.50.300:FF:000249">
    <property type="entry name" value="tRNA modification GTPase MnmE"/>
    <property type="match status" value="1"/>
</dbReference>
<dbReference type="Gene3D" id="3.40.50.300">
    <property type="entry name" value="P-loop containing nucleotide triphosphate hydrolases"/>
    <property type="match status" value="1"/>
</dbReference>
<dbReference type="Gene3D" id="3.30.1360.120">
    <property type="entry name" value="Probable tRNA modification gtpase trme, domain 1"/>
    <property type="match status" value="1"/>
</dbReference>
<dbReference type="Gene3D" id="1.20.120.430">
    <property type="entry name" value="tRNA modification GTPase MnmE domain 2"/>
    <property type="match status" value="1"/>
</dbReference>
<dbReference type="HAMAP" id="MF_00379">
    <property type="entry name" value="GTPase_MnmE"/>
    <property type="match status" value="1"/>
</dbReference>
<dbReference type="InterPro" id="IPR031168">
    <property type="entry name" value="G_TrmE"/>
</dbReference>
<dbReference type="InterPro" id="IPR006073">
    <property type="entry name" value="GTP-bd"/>
</dbReference>
<dbReference type="InterPro" id="IPR018948">
    <property type="entry name" value="GTP-bd_TrmE_N"/>
</dbReference>
<dbReference type="InterPro" id="IPR004520">
    <property type="entry name" value="GTPase_MnmE"/>
</dbReference>
<dbReference type="InterPro" id="IPR027368">
    <property type="entry name" value="MnmE_dom2"/>
</dbReference>
<dbReference type="InterPro" id="IPR025867">
    <property type="entry name" value="MnmE_helical"/>
</dbReference>
<dbReference type="InterPro" id="IPR027417">
    <property type="entry name" value="P-loop_NTPase"/>
</dbReference>
<dbReference type="InterPro" id="IPR005225">
    <property type="entry name" value="Small_GTP-bd"/>
</dbReference>
<dbReference type="InterPro" id="IPR027266">
    <property type="entry name" value="TrmE/GcvT_dom1"/>
</dbReference>
<dbReference type="NCBIfam" id="TIGR00450">
    <property type="entry name" value="mnmE_trmE_thdF"/>
    <property type="match status" value="1"/>
</dbReference>
<dbReference type="NCBIfam" id="NF003661">
    <property type="entry name" value="PRK05291.1-3"/>
    <property type="match status" value="1"/>
</dbReference>
<dbReference type="NCBIfam" id="TIGR00231">
    <property type="entry name" value="small_GTP"/>
    <property type="match status" value="1"/>
</dbReference>
<dbReference type="PANTHER" id="PTHR42714">
    <property type="entry name" value="TRNA MODIFICATION GTPASE GTPBP3"/>
    <property type="match status" value="1"/>
</dbReference>
<dbReference type="PANTHER" id="PTHR42714:SF2">
    <property type="entry name" value="TRNA MODIFICATION GTPASE GTPBP3, MITOCHONDRIAL"/>
    <property type="match status" value="1"/>
</dbReference>
<dbReference type="Pfam" id="PF01926">
    <property type="entry name" value="MMR_HSR1"/>
    <property type="match status" value="1"/>
</dbReference>
<dbReference type="Pfam" id="PF12631">
    <property type="entry name" value="MnmE_helical"/>
    <property type="match status" value="1"/>
</dbReference>
<dbReference type="Pfam" id="PF10396">
    <property type="entry name" value="TrmE_N"/>
    <property type="match status" value="1"/>
</dbReference>
<dbReference type="SUPFAM" id="SSF52540">
    <property type="entry name" value="P-loop containing nucleoside triphosphate hydrolases"/>
    <property type="match status" value="1"/>
</dbReference>
<dbReference type="SUPFAM" id="SSF116878">
    <property type="entry name" value="TrmE connector domain"/>
    <property type="match status" value="1"/>
</dbReference>
<dbReference type="PROSITE" id="PS51709">
    <property type="entry name" value="G_TRME"/>
    <property type="match status" value="1"/>
</dbReference>
<gene>
    <name evidence="1" type="primary">mnmE</name>
    <name evidence="1" type="synonym">trmE</name>
    <name type="ordered locus">EcE24377A_4216</name>
</gene>
<reference key="1">
    <citation type="journal article" date="2008" name="J. Bacteriol.">
        <title>The pangenome structure of Escherichia coli: comparative genomic analysis of E. coli commensal and pathogenic isolates.</title>
        <authorList>
            <person name="Rasko D.A."/>
            <person name="Rosovitz M.J."/>
            <person name="Myers G.S.A."/>
            <person name="Mongodin E.F."/>
            <person name="Fricke W.F."/>
            <person name="Gajer P."/>
            <person name="Crabtree J."/>
            <person name="Sebaihia M."/>
            <person name="Thomson N.R."/>
            <person name="Chaudhuri R."/>
            <person name="Henderson I.R."/>
            <person name="Sperandio V."/>
            <person name="Ravel J."/>
        </authorList>
    </citation>
    <scope>NUCLEOTIDE SEQUENCE [LARGE SCALE GENOMIC DNA]</scope>
    <source>
        <strain>E24377A / ETEC</strain>
    </source>
</reference>
<accession>A7ZTR2</accession>